<comment type="catalytic activity">
    <reaction>
        <text>Endohydrolysis of (1-&gt;4)-beta-D-glucosidic linkages in cellulose, lichenin and cereal beta-D-glucans.</text>
        <dbReference type="EC" id="3.2.1.4"/>
    </reaction>
</comment>
<comment type="similarity">
    <text evidence="5">Belongs to the glycosyl hydrolase 8 (cellulase D) family.</text>
</comment>
<protein>
    <recommendedName>
        <fullName>Endoglucanase 2</fullName>
        <ecNumber>3.2.1.4</ecNumber>
    </recommendedName>
    <alternativeName>
        <fullName>Cellulase 2</fullName>
    </alternativeName>
    <alternativeName>
        <fullName>Endo-1,4-beta-glucanase 2</fullName>
    </alternativeName>
</protein>
<evidence type="ECO:0000250" key="1"/>
<evidence type="ECO:0000255" key="2"/>
<evidence type="ECO:0000255" key="3">
    <source>
        <dbReference type="PROSITE-ProRule" id="PRU01102"/>
    </source>
</evidence>
<evidence type="ECO:0000255" key="4">
    <source>
        <dbReference type="PROSITE-ProRule" id="PRU10058"/>
    </source>
</evidence>
<evidence type="ECO:0000305" key="5"/>
<gene>
    <name type="primary">celB</name>
</gene>
<keyword id="KW-0119">Carbohydrate metabolism</keyword>
<keyword id="KW-0136">Cellulose degradation</keyword>
<keyword id="KW-0326">Glycosidase</keyword>
<keyword id="KW-0378">Hydrolase</keyword>
<keyword id="KW-0624">Polysaccharide degradation</keyword>
<keyword id="KW-0732">Signal</keyword>
<accession>P37701</accession>
<reference key="1">
    <citation type="submission" date="1993-07" db="EMBL/GenBank/DDBJ databases">
        <authorList>
            <person name="Fujino T."/>
            <person name="Karita S."/>
            <person name="Ohmiya K."/>
        </authorList>
    </citation>
    <scope>NUCLEOTIDE SEQUENCE [GENOMIC DNA]</scope>
</reference>
<proteinExistence type="inferred from homology"/>
<name>GUN2_RUMJO</name>
<dbReference type="EC" id="3.2.1.4"/>
<dbReference type="EMBL" id="D16670">
    <property type="protein sequence ID" value="BAA04078.1"/>
    <property type="molecule type" value="Genomic_DNA"/>
</dbReference>
<dbReference type="PIR" id="I40799">
    <property type="entry name" value="I40799"/>
</dbReference>
<dbReference type="SMR" id="P37701"/>
<dbReference type="CAZy" id="GH8">
    <property type="family name" value="Glycoside Hydrolase Family 8"/>
</dbReference>
<dbReference type="GO" id="GO:0008810">
    <property type="term" value="F:cellulase activity"/>
    <property type="evidence" value="ECO:0007669"/>
    <property type="project" value="UniProtKB-EC"/>
</dbReference>
<dbReference type="GO" id="GO:0030245">
    <property type="term" value="P:cellulose catabolic process"/>
    <property type="evidence" value="ECO:0007669"/>
    <property type="project" value="UniProtKB-KW"/>
</dbReference>
<dbReference type="CDD" id="cd14256">
    <property type="entry name" value="Dockerin_I"/>
    <property type="match status" value="1"/>
</dbReference>
<dbReference type="Gene3D" id="1.50.10.10">
    <property type="match status" value="1"/>
</dbReference>
<dbReference type="Gene3D" id="1.10.1330.10">
    <property type="entry name" value="Dockerin domain"/>
    <property type="match status" value="1"/>
</dbReference>
<dbReference type="InterPro" id="IPR008928">
    <property type="entry name" value="6-hairpin_glycosidase_sf"/>
</dbReference>
<dbReference type="InterPro" id="IPR012341">
    <property type="entry name" value="6hp_glycosidase-like_sf"/>
</dbReference>
<dbReference type="InterPro" id="IPR002105">
    <property type="entry name" value="Dockerin_1_rpt"/>
</dbReference>
<dbReference type="InterPro" id="IPR016134">
    <property type="entry name" value="Dockerin_dom"/>
</dbReference>
<dbReference type="InterPro" id="IPR036439">
    <property type="entry name" value="Dockerin_dom_sf"/>
</dbReference>
<dbReference type="InterPro" id="IPR018247">
    <property type="entry name" value="EF_Hand_1_Ca_BS"/>
</dbReference>
<dbReference type="InterPro" id="IPR002037">
    <property type="entry name" value="Glyco_hydro_8"/>
</dbReference>
<dbReference type="InterPro" id="IPR019834">
    <property type="entry name" value="Glyco_hydro_8_CS"/>
</dbReference>
<dbReference type="Pfam" id="PF00404">
    <property type="entry name" value="Dockerin_1"/>
    <property type="match status" value="1"/>
</dbReference>
<dbReference type="Pfam" id="PF01270">
    <property type="entry name" value="Glyco_hydro_8"/>
    <property type="match status" value="1"/>
</dbReference>
<dbReference type="PRINTS" id="PR00735">
    <property type="entry name" value="GLHYDRLASE8"/>
</dbReference>
<dbReference type="SUPFAM" id="SSF48208">
    <property type="entry name" value="Six-hairpin glycosidases"/>
    <property type="match status" value="1"/>
</dbReference>
<dbReference type="SUPFAM" id="SSF63446">
    <property type="entry name" value="Type I dockerin domain"/>
    <property type="match status" value="1"/>
</dbReference>
<dbReference type="PROSITE" id="PS00448">
    <property type="entry name" value="CLOS_CELLULOSOME_RPT"/>
    <property type="match status" value="1"/>
</dbReference>
<dbReference type="PROSITE" id="PS51766">
    <property type="entry name" value="DOCKERIN"/>
    <property type="match status" value="1"/>
</dbReference>
<dbReference type="PROSITE" id="PS00018">
    <property type="entry name" value="EF_HAND_1"/>
    <property type="match status" value="2"/>
</dbReference>
<dbReference type="PROSITE" id="PS00812">
    <property type="entry name" value="GLYCOSYL_HYDROL_F8"/>
    <property type="match status" value="1"/>
</dbReference>
<organism>
    <name type="scientific">Ruminiclostridium josui</name>
    <name type="common">Clostridium josui</name>
    <dbReference type="NCBI Taxonomy" id="1499"/>
    <lineage>
        <taxon>Bacteria</taxon>
        <taxon>Bacillati</taxon>
        <taxon>Bacillota</taxon>
        <taxon>Clostridia</taxon>
        <taxon>Eubacteriales</taxon>
        <taxon>Oscillospiraceae</taxon>
        <taxon>Ruminiclostridium</taxon>
    </lineage>
</organism>
<sequence length="460" mass="50599">MIKGSSLKRIKSLVMMAIFSVSIITTAIVSSAADQIPFPYNATYPYGAYSCLADSQSSANNLLKSEWEQWKSAHITSNGARGYKRVQRDASTNYDTVSEGLGYGMLLAVYFGEQQLFDDLYRYVKVFLNSNGLMSWRIDANGNIMGQNAIGAATDADEDIAVSLVFAHKKWGTSGGFNYQTEAKNYINNIYNKMVEPGTYVLKPGDMWGGSDVTNPSYFAPAWYRIFADFTGNSGWINVANKCYEIADKARNSNTGLVPDWCTANGTPASGQGYDFYYDAIRYQWRTAIDYSWYGTAKAKTHCDAISNFFKNIGYPNIKDGYTLSGSQISANHTATFVSCAAAAAMTGTDATYAKNIYNECVKVKDTGNYTYFGNTLRMMILLYTTGNFPNLYSYSSQPQQGLKGDVNNDGAIDALDIAALKKAILTQSTSNINLTNADMNNDGNIDAIDFAQLKVKLLN</sequence>
<feature type="signal peptide" evidence="2">
    <location>
        <begin position="1"/>
        <end position="32"/>
    </location>
</feature>
<feature type="chain" id="PRO_0000007934" description="Endoglucanase 2">
    <location>
        <begin position="33"/>
        <end position="460"/>
    </location>
</feature>
<feature type="domain" description="Dockerin" evidence="3">
    <location>
        <begin position="400"/>
        <end position="460"/>
    </location>
</feature>
<feature type="active site" description="Proton donor" evidence="1">
    <location>
        <position position="99"/>
    </location>
</feature>
<feature type="active site" description="Nucleophile" evidence="4">
    <location>
        <position position="155"/>
    </location>
</feature>